<protein>
    <recommendedName>
        <fullName evidence="1">Proline--tRNA ligase</fullName>
        <ecNumber evidence="1">6.1.1.15</ecNumber>
    </recommendedName>
    <alternativeName>
        <fullName evidence="1">Prolyl-tRNA synthetase</fullName>
        <shortName evidence="1">ProRS</shortName>
    </alternativeName>
</protein>
<organism>
    <name type="scientific">Campylobacter jejuni subsp. jejuni serotype O:2 (strain ATCC 700819 / NCTC 11168)</name>
    <dbReference type="NCBI Taxonomy" id="192222"/>
    <lineage>
        <taxon>Bacteria</taxon>
        <taxon>Pseudomonadati</taxon>
        <taxon>Campylobacterota</taxon>
        <taxon>Epsilonproteobacteria</taxon>
        <taxon>Campylobacterales</taxon>
        <taxon>Campylobacteraceae</taxon>
        <taxon>Campylobacter</taxon>
    </lineage>
</organism>
<keyword id="KW-0030">Aminoacyl-tRNA synthetase</keyword>
<keyword id="KW-0067">ATP-binding</keyword>
<keyword id="KW-0963">Cytoplasm</keyword>
<keyword id="KW-0436">Ligase</keyword>
<keyword id="KW-0547">Nucleotide-binding</keyword>
<keyword id="KW-0648">Protein biosynthesis</keyword>
<keyword id="KW-1185">Reference proteome</keyword>
<reference key="1">
    <citation type="journal article" date="2000" name="Nature">
        <title>The genome sequence of the food-borne pathogen Campylobacter jejuni reveals hypervariable sequences.</title>
        <authorList>
            <person name="Parkhill J."/>
            <person name="Wren B.W."/>
            <person name="Mungall K.L."/>
            <person name="Ketley J.M."/>
            <person name="Churcher C.M."/>
            <person name="Basham D."/>
            <person name="Chillingworth T."/>
            <person name="Davies R.M."/>
            <person name="Feltwell T."/>
            <person name="Holroyd S."/>
            <person name="Jagels K."/>
            <person name="Karlyshev A.V."/>
            <person name="Moule S."/>
            <person name="Pallen M.J."/>
            <person name="Penn C.W."/>
            <person name="Quail M.A."/>
            <person name="Rajandream M.A."/>
            <person name="Rutherford K.M."/>
            <person name="van Vliet A.H.M."/>
            <person name="Whitehead S."/>
            <person name="Barrell B.G."/>
        </authorList>
    </citation>
    <scope>NUCLEOTIDE SEQUENCE [LARGE SCALE GENOMIC DNA]</scope>
    <source>
        <strain>ATCC 700819 / NCTC 11168</strain>
    </source>
</reference>
<name>SYP_CAMJE</name>
<dbReference type="EC" id="6.1.1.15" evidence="1"/>
<dbReference type="EMBL" id="AL111168">
    <property type="protein sequence ID" value="CAL34689.1"/>
    <property type="molecule type" value="Genomic_DNA"/>
</dbReference>
<dbReference type="PIR" id="G81400">
    <property type="entry name" value="G81400"/>
</dbReference>
<dbReference type="RefSeq" id="WP_010891863.1">
    <property type="nucleotide sequence ID" value="NZ_SZUC01000002.1"/>
</dbReference>
<dbReference type="RefSeq" id="YP_002343974.1">
    <property type="nucleotide sequence ID" value="NC_002163.1"/>
</dbReference>
<dbReference type="SMR" id="Q9PHX1"/>
<dbReference type="IntAct" id="Q9PHX1">
    <property type="interactions" value="5"/>
</dbReference>
<dbReference type="STRING" id="192222.Cj0543"/>
<dbReference type="PaxDb" id="192222-Cj0543"/>
<dbReference type="EnsemblBacteria" id="CAL34689">
    <property type="protein sequence ID" value="CAL34689"/>
    <property type="gene ID" value="Cj0543"/>
</dbReference>
<dbReference type="GeneID" id="904869"/>
<dbReference type="KEGG" id="cje:Cj0543"/>
<dbReference type="PATRIC" id="fig|192222.6.peg.535"/>
<dbReference type="eggNOG" id="COG0442">
    <property type="taxonomic scope" value="Bacteria"/>
</dbReference>
<dbReference type="HOGENOM" id="CLU_016739_0_0_7"/>
<dbReference type="OrthoDB" id="9809052at2"/>
<dbReference type="Proteomes" id="UP000000799">
    <property type="component" value="Chromosome"/>
</dbReference>
<dbReference type="GO" id="GO:0005829">
    <property type="term" value="C:cytosol"/>
    <property type="evidence" value="ECO:0007669"/>
    <property type="project" value="TreeGrafter"/>
</dbReference>
<dbReference type="GO" id="GO:0002161">
    <property type="term" value="F:aminoacyl-tRNA deacylase activity"/>
    <property type="evidence" value="ECO:0007669"/>
    <property type="project" value="InterPro"/>
</dbReference>
<dbReference type="GO" id="GO:0005524">
    <property type="term" value="F:ATP binding"/>
    <property type="evidence" value="ECO:0007669"/>
    <property type="project" value="UniProtKB-UniRule"/>
</dbReference>
<dbReference type="GO" id="GO:0004827">
    <property type="term" value="F:proline-tRNA ligase activity"/>
    <property type="evidence" value="ECO:0007669"/>
    <property type="project" value="UniProtKB-UniRule"/>
</dbReference>
<dbReference type="GO" id="GO:0006433">
    <property type="term" value="P:prolyl-tRNA aminoacylation"/>
    <property type="evidence" value="ECO:0007669"/>
    <property type="project" value="UniProtKB-UniRule"/>
</dbReference>
<dbReference type="CDD" id="cd04334">
    <property type="entry name" value="ProRS-INS"/>
    <property type="match status" value="1"/>
</dbReference>
<dbReference type="CDD" id="cd00861">
    <property type="entry name" value="ProRS_anticodon_short"/>
    <property type="match status" value="1"/>
</dbReference>
<dbReference type="CDD" id="cd00779">
    <property type="entry name" value="ProRS_core_prok"/>
    <property type="match status" value="1"/>
</dbReference>
<dbReference type="FunFam" id="3.30.930.10:FF:000065">
    <property type="entry name" value="Proline--tRNA ligase"/>
    <property type="match status" value="1"/>
</dbReference>
<dbReference type="FunFam" id="3.30.930.10:FF:000066">
    <property type="entry name" value="Proline--tRNA ligase"/>
    <property type="match status" value="1"/>
</dbReference>
<dbReference type="Gene3D" id="3.40.50.800">
    <property type="entry name" value="Anticodon-binding domain"/>
    <property type="match status" value="1"/>
</dbReference>
<dbReference type="Gene3D" id="3.30.930.10">
    <property type="entry name" value="Bira Bifunctional Protein, Domain 2"/>
    <property type="match status" value="2"/>
</dbReference>
<dbReference type="HAMAP" id="MF_01569">
    <property type="entry name" value="Pro_tRNA_synth_type1"/>
    <property type="match status" value="1"/>
</dbReference>
<dbReference type="InterPro" id="IPR002314">
    <property type="entry name" value="aa-tRNA-synt_IIb"/>
</dbReference>
<dbReference type="InterPro" id="IPR006195">
    <property type="entry name" value="aa-tRNA-synth_II"/>
</dbReference>
<dbReference type="InterPro" id="IPR045864">
    <property type="entry name" value="aa-tRNA-synth_II/BPL/LPL"/>
</dbReference>
<dbReference type="InterPro" id="IPR004154">
    <property type="entry name" value="Anticodon-bd"/>
</dbReference>
<dbReference type="InterPro" id="IPR036621">
    <property type="entry name" value="Anticodon-bd_dom_sf"/>
</dbReference>
<dbReference type="InterPro" id="IPR002316">
    <property type="entry name" value="Pro-tRNA-ligase_IIa"/>
</dbReference>
<dbReference type="InterPro" id="IPR004500">
    <property type="entry name" value="Pro-tRNA-synth_IIa_bac-type"/>
</dbReference>
<dbReference type="InterPro" id="IPR023717">
    <property type="entry name" value="Pro-tRNA-Synthase_IIa_type1"/>
</dbReference>
<dbReference type="InterPro" id="IPR050062">
    <property type="entry name" value="Pro-tRNA_synthetase"/>
</dbReference>
<dbReference type="InterPro" id="IPR044140">
    <property type="entry name" value="ProRS_anticodon_short"/>
</dbReference>
<dbReference type="InterPro" id="IPR033730">
    <property type="entry name" value="ProRS_core_prok"/>
</dbReference>
<dbReference type="InterPro" id="IPR036754">
    <property type="entry name" value="YbaK/aa-tRNA-synt-asso_dom_sf"/>
</dbReference>
<dbReference type="InterPro" id="IPR007214">
    <property type="entry name" value="YbaK/aa-tRNA-synth-assoc-dom"/>
</dbReference>
<dbReference type="NCBIfam" id="NF006625">
    <property type="entry name" value="PRK09194.1"/>
    <property type="match status" value="1"/>
</dbReference>
<dbReference type="NCBIfam" id="TIGR00409">
    <property type="entry name" value="proS_fam_II"/>
    <property type="match status" value="1"/>
</dbReference>
<dbReference type="PANTHER" id="PTHR42753">
    <property type="entry name" value="MITOCHONDRIAL RIBOSOME PROTEIN L39/PROLYL-TRNA LIGASE FAMILY MEMBER"/>
    <property type="match status" value="1"/>
</dbReference>
<dbReference type="PANTHER" id="PTHR42753:SF2">
    <property type="entry name" value="PROLINE--TRNA LIGASE"/>
    <property type="match status" value="1"/>
</dbReference>
<dbReference type="Pfam" id="PF03129">
    <property type="entry name" value="HGTP_anticodon"/>
    <property type="match status" value="1"/>
</dbReference>
<dbReference type="Pfam" id="PF00587">
    <property type="entry name" value="tRNA-synt_2b"/>
    <property type="match status" value="1"/>
</dbReference>
<dbReference type="Pfam" id="PF04073">
    <property type="entry name" value="tRNA_edit"/>
    <property type="match status" value="1"/>
</dbReference>
<dbReference type="PRINTS" id="PR01046">
    <property type="entry name" value="TRNASYNTHPRO"/>
</dbReference>
<dbReference type="SUPFAM" id="SSF52954">
    <property type="entry name" value="Class II aaRS ABD-related"/>
    <property type="match status" value="1"/>
</dbReference>
<dbReference type="SUPFAM" id="SSF55681">
    <property type="entry name" value="Class II aaRS and biotin synthetases"/>
    <property type="match status" value="1"/>
</dbReference>
<dbReference type="SUPFAM" id="SSF55826">
    <property type="entry name" value="YbaK/ProRS associated domain"/>
    <property type="match status" value="1"/>
</dbReference>
<dbReference type="PROSITE" id="PS50862">
    <property type="entry name" value="AA_TRNA_LIGASE_II"/>
    <property type="match status" value="1"/>
</dbReference>
<feature type="chain" id="PRO_0000248663" description="Proline--tRNA ligase">
    <location>
        <begin position="1"/>
        <end position="569"/>
    </location>
</feature>
<accession>Q9PHX1</accession>
<accession>Q0PAX3</accession>
<evidence type="ECO:0000255" key="1">
    <source>
        <dbReference type="HAMAP-Rule" id="MF_01569"/>
    </source>
</evidence>
<comment type="function">
    <text evidence="1">Catalyzes the attachment of proline to tRNA(Pro) in a two-step reaction: proline is first activated by ATP to form Pro-AMP and then transferred to the acceptor end of tRNA(Pro). As ProRS can inadvertently accommodate and process non-cognate amino acids such as alanine and cysteine, to avoid such errors it has two additional distinct editing activities against alanine. One activity is designated as 'pretransfer' editing and involves the tRNA(Pro)-independent hydrolysis of activated Ala-AMP. The other activity is designated 'posttransfer' editing and involves deacylation of mischarged Ala-tRNA(Pro). The misacylated Cys-tRNA(Pro) is not edited by ProRS.</text>
</comment>
<comment type="catalytic activity">
    <reaction evidence="1">
        <text>tRNA(Pro) + L-proline + ATP = L-prolyl-tRNA(Pro) + AMP + diphosphate</text>
        <dbReference type="Rhea" id="RHEA:14305"/>
        <dbReference type="Rhea" id="RHEA-COMP:9700"/>
        <dbReference type="Rhea" id="RHEA-COMP:9702"/>
        <dbReference type="ChEBI" id="CHEBI:30616"/>
        <dbReference type="ChEBI" id="CHEBI:33019"/>
        <dbReference type="ChEBI" id="CHEBI:60039"/>
        <dbReference type="ChEBI" id="CHEBI:78442"/>
        <dbReference type="ChEBI" id="CHEBI:78532"/>
        <dbReference type="ChEBI" id="CHEBI:456215"/>
        <dbReference type="EC" id="6.1.1.15"/>
    </reaction>
</comment>
<comment type="subunit">
    <text evidence="1">Homodimer.</text>
</comment>
<comment type="subcellular location">
    <subcellularLocation>
        <location evidence="1">Cytoplasm</location>
    </subcellularLocation>
</comment>
<comment type="domain">
    <text evidence="1">Consists of three domains: the N-terminal catalytic domain, the editing domain and the C-terminal anticodon-binding domain.</text>
</comment>
<comment type="similarity">
    <text evidence="1">Belongs to the class-II aminoacyl-tRNA synthetase family. ProS type 1 subfamily.</text>
</comment>
<gene>
    <name evidence="1" type="primary">proS</name>
    <name type="ordered locus">Cj0543</name>
</gene>
<sequence length="569" mass="64606">MMRFTKFYAPSLKEAPKDASLPSHIFLTRAGFVEQIGSGLYNFLPLGKRVLDKIKNIVKEEMDKAGAQEVNLSFITPASLWQESGRYNVFGKELLRFKDRKENEFVLGPTHEEAMLSLVKNKITSYKQLPLHLYQIGLKFRDEARPRFGLLRCREFLMKDGYSFHANEEDLGREFELMYKTYSQILQRMGLDFRAVEADSGAIGGSGSKEFMVLAKNGEDDILICENCDYAANVEAAKRAKKTCQDERPEANYASKFHTPNIKTIDSLAQFFKINAFYTIKAVVKKAIYENESKLVVFFIRGSDDLQEVKAQNTCSALELVDASEEELKKAGLVAGFIGFVGLKDIDFYIDFELENEKQMIMGANEKDYHLIGIDVVNLNKDRFKDLIEVKEGDCCVKCGAKLKQSKGIEVGHIFKLGQKYSKAMNANFLDENGKSQPFYMGCYGIGVSRLLAVAIEANHDEKGCIWNKTLAPFVLEIIVSNLKDEKALEFANKLYRDLTNLGLEVLLDDRNERFGVKMNDFELMGFPYALVIGKGLENNEIELIQREGLVKELIKTDELMEILKKKVL</sequence>
<proteinExistence type="inferred from homology"/>